<accession>B9JZ98</accession>
<dbReference type="EMBL" id="CP000633">
    <property type="protein sequence ID" value="ACM35210.1"/>
    <property type="molecule type" value="Genomic_DNA"/>
</dbReference>
<dbReference type="RefSeq" id="WP_012654740.1">
    <property type="nucleotide sequence ID" value="NC_011989.1"/>
</dbReference>
<dbReference type="STRING" id="311402.Avi_0319"/>
<dbReference type="KEGG" id="avi:Avi_0319"/>
<dbReference type="eggNOG" id="COG3002">
    <property type="taxonomic scope" value="Bacteria"/>
</dbReference>
<dbReference type="HOGENOM" id="CLU_009885_1_0_5"/>
<dbReference type="Proteomes" id="UP000001596">
    <property type="component" value="Chromosome 1"/>
</dbReference>
<dbReference type="GO" id="GO:0005886">
    <property type="term" value="C:plasma membrane"/>
    <property type="evidence" value="ECO:0007669"/>
    <property type="project" value="UniProtKB-SubCell"/>
</dbReference>
<dbReference type="GO" id="GO:0008270">
    <property type="term" value="F:zinc ion binding"/>
    <property type="evidence" value="ECO:0007669"/>
    <property type="project" value="UniProtKB-UniRule"/>
</dbReference>
<dbReference type="HAMAP" id="MF_01871">
    <property type="entry name" value="DabA"/>
    <property type="match status" value="1"/>
</dbReference>
<dbReference type="InterPro" id="IPR018752">
    <property type="entry name" value="DabA"/>
</dbReference>
<dbReference type="PANTHER" id="PTHR38344:SF1">
    <property type="entry name" value="INORGANIC CARBON TRANSPORTER SUBUNIT DABA-RELATED"/>
    <property type="match status" value="1"/>
</dbReference>
<dbReference type="PANTHER" id="PTHR38344">
    <property type="entry name" value="UPF0753 PROTEIN AQ_863"/>
    <property type="match status" value="1"/>
</dbReference>
<dbReference type="Pfam" id="PF10070">
    <property type="entry name" value="DabA"/>
    <property type="match status" value="1"/>
</dbReference>
<protein>
    <recommendedName>
        <fullName evidence="1">Probable inorganic carbon transporter subunit DabA</fullName>
    </recommendedName>
</protein>
<comment type="function">
    <text evidence="1">Part of an energy-coupled inorganic carbon pump.</text>
</comment>
<comment type="cofactor">
    <cofactor evidence="1">
        <name>Zn(2+)</name>
        <dbReference type="ChEBI" id="CHEBI:29105"/>
    </cofactor>
</comment>
<comment type="subunit">
    <text evidence="1">Forms a complex with DabB.</text>
</comment>
<comment type="subcellular location">
    <subcellularLocation>
        <location evidence="1">Cell inner membrane</location>
        <topology evidence="1">Peripheral membrane protein</topology>
    </subcellularLocation>
</comment>
<comment type="similarity">
    <text evidence="1">Belongs to the inorganic carbon transporter (TC 9.A.2) DabA family.</text>
</comment>
<feature type="chain" id="PRO_0000387230" description="Probable inorganic carbon transporter subunit DabA">
    <location>
        <begin position="1"/>
        <end position="808"/>
    </location>
</feature>
<feature type="binding site" evidence="1">
    <location>
        <position position="334"/>
    </location>
    <ligand>
        <name>Zn(2+)</name>
        <dbReference type="ChEBI" id="CHEBI:29105"/>
    </ligand>
</feature>
<feature type="binding site" evidence="1">
    <location>
        <position position="336"/>
    </location>
    <ligand>
        <name>Zn(2+)</name>
        <dbReference type="ChEBI" id="CHEBI:29105"/>
    </ligand>
</feature>
<feature type="binding site" evidence="1">
    <location>
        <position position="494"/>
    </location>
    <ligand>
        <name>Zn(2+)</name>
        <dbReference type="ChEBI" id="CHEBI:29105"/>
    </ligand>
</feature>
<feature type="binding site" evidence="1">
    <location>
        <position position="509"/>
    </location>
    <ligand>
        <name>Zn(2+)</name>
        <dbReference type="ChEBI" id="CHEBI:29105"/>
    </ligand>
</feature>
<proteinExistence type="inferred from homology"/>
<sequence length="808" mass="86939">MLHSPIPTKADPMIFEAAADRAARAIPPVWPLMSSVAVNPFLGQAGETLAKAGARLARVAGIAITMPRHWYQQKIDTGEISDADLLAALACAPADLRPIDLAALKAAAALNPPRPQALASVADLAARASGVDWPGLLTERLGAWMAGYFDEGQALWAAPRGKSAYGAWRAVATHDLTPEIAGLRGFARHVSEAPETAMAVIARVCTRLDLPVEALETYFHQMLMSLGGWGQYARYKLWQAELAGGSDQTITDLLAIRLIWEEALFLRYGDQIGEAWAHVRVAHAAPVVATPDLMIDAILQDAAERAAQRELARILAGNAPQIHETRPLVQAAFCIDVRSEVFRRALESLNPQIQTLGFAGFFGLAASHRRFASDVAESRFPVLLNPALKSRAGGPYRAEDAEPQRIKARAKRAWGRFKLAAVSSFAFVEATGPIYVGKLLSDALGLPHASAPNDPAPQLDPALDLASRVKAAGAVLRAMSLTTGFARLVLLAGHGANTVNNPHASGLHCGACGGYSGEVNARLLAALLNDPDVRAGLTETGMAIPQDTLFLAALHDTTTDRVTLYADDHPCQTHEADIAQARTWLADAGRLARGERALRLPRAADETSISKRSRDWSETRPEWALAGCKAFIAAPRSRTATKNLEGRAFLHDYDWTQDKSFSTLELILTAPVIVASWISLQYYGSTVAPEAFGGGNKLLHNVTGGIGVVEGNGGLLRAGLPWQSVHDGQNYMHEPLRLSVCLEAPVAAISEVLGRHDGVRALFDNGWLHLFTLNEEGSIAWRYNGGLQWVPIDDTEDAEQRSKLKVAV</sequence>
<evidence type="ECO:0000255" key="1">
    <source>
        <dbReference type="HAMAP-Rule" id="MF_01871"/>
    </source>
</evidence>
<name>DABA_ALLAM</name>
<gene>
    <name evidence="1" type="primary">dabA</name>
    <name type="ordered locus">Avi_0319</name>
</gene>
<organism>
    <name type="scientific">Allorhizobium ampelinum (strain ATCC BAA-846 / DSM 112012 / S4)</name>
    <name type="common">Agrobacterium vitis (strain S4)</name>
    <dbReference type="NCBI Taxonomy" id="311402"/>
    <lineage>
        <taxon>Bacteria</taxon>
        <taxon>Pseudomonadati</taxon>
        <taxon>Pseudomonadota</taxon>
        <taxon>Alphaproteobacteria</taxon>
        <taxon>Hyphomicrobiales</taxon>
        <taxon>Rhizobiaceae</taxon>
        <taxon>Rhizobium/Agrobacterium group</taxon>
        <taxon>Allorhizobium</taxon>
        <taxon>Allorhizobium ampelinum</taxon>
    </lineage>
</organism>
<keyword id="KW-0997">Cell inner membrane</keyword>
<keyword id="KW-1003">Cell membrane</keyword>
<keyword id="KW-0472">Membrane</keyword>
<keyword id="KW-0479">Metal-binding</keyword>
<keyword id="KW-1185">Reference proteome</keyword>
<keyword id="KW-0813">Transport</keyword>
<keyword id="KW-0862">Zinc</keyword>
<reference key="1">
    <citation type="journal article" date="2009" name="J. Bacteriol.">
        <title>Genome sequences of three Agrobacterium biovars help elucidate the evolution of multichromosome genomes in bacteria.</title>
        <authorList>
            <person name="Slater S.C."/>
            <person name="Goldman B.S."/>
            <person name="Goodner B."/>
            <person name="Setubal J.C."/>
            <person name="Farrand S.K."/>
            <person name="Nester E.W."/>
            <person name="Burr T.J."/>
            <person name="Banta L."/>
            <person name="Dickerman A.W."/>
            <person name="Paulsen I."/>
            <person name="Otten L."/>
            <person name="Suen G."/>
            <person name="Welch R."/>
            <person name="Almeida N.F."/>
            <person name="Arnold F."/>
            <person name="Burton O.T."/>
            <person name="Du Z."/>
            <person name="Ewing A."/>
            <person name="Godsy E."/>
            <person name="Heisel S."/>
            <person name="Houmiel K.L."/>
            <person name="Jhaveri J."/>
            <person name="Lu J."/>
            <person name="Miller N.M."/>
            <person name="Norton S."/>
            <person name="Chen Q."/>
            <person name="Phoolcharoen W."/>
            <person name="Ohlin V."/>
            <person name="Ondrusek D."/>
            <person name="Pride N."/>
            <person name="Stricklin S.L."/>
            <person name="Sun J."/>
            <person name="Wheeler C."/>
            <person name="Wilson L."/>
            <person name="Zhu H."/>
            <person name="Wood D.W."/>
        </authorList>
    </citation>
    <scope>NUCLEOTIDE SEQUENCE [LARGE SCALE GENOMIC DNA]</scope>
    <source>
        <strain>ATCC BAA-846 / DSM 112012 / S4</strain>
    </source>
</reference>